<proteinExistence type="inferred from homology"/>
<gene>
    <name evidence="1" type="primary">rplQ</name>
    <name type="ordered locus">M6_Spy0120</name>
</gene>
<feature type="chain" id="PRO_1000055959" description="Large ribosomal subunit protein bL17">
    <location>
        <begin position="1"/>
        <end position="128"/>
    </location>
</feature>
<keyword id="KW-0687">Ribonucleoprotein</keyword>
<keyword id="KW-0689">Ribosomal protein</keyword>
<dbReference type="EMBL" id="CP000003">
    <property type="protein sequence ID" value="AAT86255.1"/>
    <property type="molecule type" value="Genomic_DNA"/>
</dbReference>
<dbReference type="RefSeq" id="WP_002986602.1">
    <property type="nucleotide sequence ID" value="NC_006086.1"/>
</dbReference>
<dbReference type="SMR" id="Q5XEA8"/>
<dbReference type="GeneID" id="83703931"/>
<dbReference type="KEGG" id="spa:M6_Spy0120"/>
<dbReference type="HOGENOM" id="CLU_074407_2_2_9"/>
<dbReference type="Proteomes" id="UP000001167">
    <property type="component" value="Chromosome"/>
</dbReference>
<dbReference type="GO" id="GO:0022625">
    <property type="term" value="C:cytosolic large ribosomal subunit"/>
    <property type="evidence" value="ECO:0007669"/>
    <property type="project" value="TreeGrafter"/>
</dbReference>
<dbReference type="GO" id="GO:0003735">
    <property type="term" value="F:structural constituent of ribosome"/>
    <property type="evidence" value="ECO:0007669"/>
    <property type="project" value="InterPro"/>
</dbReference>
<dbReference type="GO" id="GO:0006412">
    <property type="term" value="P:translation"/>
    <property type="evidence" value="ECO:0007669"/>
    <property type="project" value="UniProtKB-UniRule"/>
</dbReference>
<dbReference type="FunFam" id="3.90.1030.10:FF:000002">
    <property type="entry name" value="50S ribosomal protein L17"/>
    <property type="match status" value="1"/>
</dbReference>
<dbReference type="Gene3D" id="3.90.1030.10">
    <property type="entry name" value="Ribosomal protein L17"/>
    <property type="match status" value="1"/>
</dbReference>
<dbReference type="HAMAP" id="MF_01368">
    <property type="entry name" value="Ribosomal_bL17"/>
    <property type="match status" value="1"/>
</dbReference>
<dbReference type="InterPro" id="IPR000456">
    <property type="entry name" value="Ribosomal_bL17"/>
</dbReference>
<dbReference type="InterPro" id="IPR047859">
    <property type="entry name" value="Ribosomal_bL17_CS"/>
</dbReference>
<dbReference type="InterPro" id="IPR036373">
    <property type="entry name" value="Ribosomal_bL17_sf"/>
</dbReference>
<dbReference type="NCBIfam" id="TIGR00059">
    <property type="entry name" value="L17"/>
    <property type="match status" value="1"/>
</dbReference>
<dbReference type="PANTHER" id="PTHR14413:SF16">
    <property type="entry name" value="LARGE RIBOSOMAL SUBUNIT PROTEIN BL17M"/>
    <property type="match status" value="1"/>
</dbReference>
<dbReference type="PANTHER" id="PTHR14413">
    <property type="entry name" value="RIBOSOMAL PROTEIN L17"/>
    <property type="match status" value="1"/>
</dbReference>
<dbReference type="Pfam" id="PF01196">
    <property type="entry name" value="Ribosomal_L17"/>
    <property type="match status" value="1"/>
</dbReference>
<dbReference type="SUPFAM" id="SSF64263">
    <property type="entry name" value="Prokaryotic ribosomal protein L17"/>
    <property type="match status" value="1"/>
</dbReference>
<dbReference type="PROSITE" id="PS01167">
    <property type="entry name" value="RIBOSOMAL_L17"/>
    <property type="match status" value="1"/>
</dbReference>
<reference key="1">
    <citation type="journal article" date="2004" name="J. Infect. Dis.">
        <title>Progress toward characterization of the group A Streptococcus metagenome: complete genome sequence of a macrolide-resistant serotype M6 strain.</title>
        <authorList>
            <person name="Banks D.J."/>
            <person name="Porcella S.F."/>
            <person name="Barbian K.D."/>
            <person name="Beres S.B."/>
            <person name="Philips L.E."/>
            <person name="Voyich J.M."/>
            <person name="DeLeo F.R."/>
            <person name="Martin J.M."/>
            <person name="Somerville G.A."/>
            <person name="Musser J.M."/>
        </authorList>
    </citation>
    <scope>NUCLEOTIDE SEQUENCE [LARGE SCALE GENOMIC DNA]</scope>
    <source>
        <strain>ATCC BAA-946 / MGAS10394</strain>
    </source>
</reference>
<evidence type="ECO:0000255" key="1">
    <source>
        <dbReference type="HAMAP-Rule" id="MF_01368"/>
    </source>
</evidence>
<evidence type="ECO:0000305" key="2"/>
<comment type="subunit">
    <text evidence="1">Part of the 50S ribosomal subunit. Contacts protein L32.</text>
</comment>
<comment type="similarity">
    <text evidence="1">Belongs to the bacterial ribosomal protein bL17 family.</text>
</comment>
<organism>
    <name type="scientific">Streptococcus pyogenes serotype M6 (strain ATCC BAA-946 / MGAS10394)</name>
    <dbReference type="NCBI Taxonomy" id="286636"/>
    <lineage>
        <taxon>Bacteria</taxon>
        <taxon>Bacillati</taxon>
        <taxon>Bacillota</taxon>
        <taxon>Bacilli</taxon>
        <taxon>Lactobacillales</taxon>
        <taxon>Streptococcaceae</taxon>
        <taxon>Streptococcus</taxon>
    </lineage>
</organism>
<accession>Q5XEA8</accession>
<protein>
    <recommendedName>
        <fullName evidence="1">Large ribosomal subunit protein bL17</fullName>
    </recommendedName>
    <alternativeName>
        <fullName evidence="2">50S ribosomal protein L17</fullName>
    </alternativeName>
</protein>
<sequence length="128" mass="14522">MAYRKLGRTSSQRKAMLRDLTTDLLINESIVTTEARAKEIRKTVEKMITLGKRGDLHARRQAAAYVRNEIASENYDEATDKYTSTTALQKLFSEIAPRYAERNGGYTRILKTEPRRGDAAPMAIIELV</sequence>
<name>RL17_STRP6</name>